<comment type="similarity">
    <text evidence="2">Belongs to the LysR transcriptional regulatory family.</text>
</comment>
<comment type="sequence caution" evidence="2">
    <conflict type="frameshift">
        <sequence resource="EMBL-CDS" id="AAA66344"/>
    </conflict>
</comment>
<reference key="1">
    <citation type="journal article" date="1993" name="J. Bacteriol.">
        <title>Lipoic acid metabolism in Escherichia coli: sequencing and functional characterization of the lipA and lipB genes.</title>
        <authorList>
            <person name="Reed K.E."/>
            <person name="Cronan J.E. Jr."/>
        </authorList>
    </citation>
    <scope>NUCLEOTIDE SEQUENCE [GENOMIC DNA]</scope>
    <source>
        <strain>K12 / W3110 / ATCC 27325 / DSM 5911</strain>
    </source>
</reference>
<reference key="2">
    <citation type="journal article" date="1996" name="DNA Res.">
        <title>A 718-kb DNA sequence of the Escherichia coli K-12 genome corresponding to the 12.7-28.0 min region on the linkage map.</title>
        <authorList>
            <person name="Oshima T."/>
            <person name="Aiba H."/>
            <person name="Baba T."/>
            <person name="Fujita K."/>
            <person name="Hayashi K."/>
            <person name="Honjo A."/>
            <person name="Ikemoto K."/>
            <person name="Inada T."/>
            <person name="Itoh T."/>
            <person name="Kajihara M."/>
            <person name="Kanai K."/>
            <person name="Kashimoto K."/>
            <person name="Kimura S."/>
            <person name="Kitagawa M."/>
            <person name="Makino K."/>
            <person name="Masuda S."/>
            <person name="Miki T."/>
            <person name="Mizobuchi K."/>
            <person name="Mori H."/>
            <person name="Motomura K."/>
            <person name="Nakamura Y."/>
            <person name="Nashimoto H."/>
            <person name="Nishio Y."/>
            <person name="Saito N."/>
            <person name="Sampei G."/>
            <person name="Seki Y."/>
            <person name="Tagami H."/>
            <person name="Takemoto K."/>
            <person name="Wada C."/>
            <person name="Yamamoto Y."/>
            <person name="Yano M."/>
            <person name="Horiuchi T."/>
        </authorList>
    </citation>
    <scope>NUCLEOTIDE SEQUENCE [LARGE SCALE GENOMIC DNA]</scope>
    <source>
        <strain>K12 / W3110 / ATCC 27325 / DSM 5911</strain>
    </source>
</reference>
<reference key="3">
    <citation type="submission" date="1997-01" db="EMBL/GenBank/DDBJ databases">
        <title>Sequence of minutes 4-25 of Escherichia coli.</title>
        <authorList>
            <person name="Chung E."/>
            <person name="Allen E."/>
            <person name="Araujo R."/>
            <person name="Aparicio A.M."/>
            <person name="Davis K."/>
            <person name="Duncan M."/>
            <person name="Federspiel N."/>
            <person name="Hyman R."/>
            <person name="Kalman S."/>
            <person name="Komp C."/>
            <person name="Kurdi O."/>
            <person name="Lew H."/>
            <person name="Lin D."/>
            <person name="Namath A."/>
            <person name="Oefner P."/>
            <person name="Roberts D."/>
            <person name="Schramm S."/>
            <person name="Davis R.W."/>
        </authorList>
    </citation>
    <scope>NUCLEOTIDE SEQUENCE [LARGE SCALE GENOMIC DNA]</scope>
    <source>
        <strain>K12 / MG1655 / ATCC 47076</strain>
    </source>
</reference>
<reference key="4">
    <citation type="journal article" date="1997" name="Science">
        <title>The complete genome sequence of Escherichia coli K-12.</title>
        <authorList>
            <person name="Blattner F.R."/>
            <person name="Plunkett G. III"/>
            <person name="Bloch C.A."/>
            <person name="Perna N.T."/>
            <person name="Burland V."/>
            <person name="Riley M."/>
            <person name="Collado-Vides J."/>
            <person name="Glasner J.D."/>
            <person name="Rode C.K."/>
            <person name="Mayhew G.F."/>
            <person name="Gregor J."/>
            <person name="Davis N.W."/>
            <person name="Kirkpatrick H.A."/>
            <person name="Goeden M.A."/>
            <person name="Rose D.J."/>
            <person name="Mau B."/>
            <person name="Shao Y."/>
        </authorList>
    </citation>
    <scope>NUCLEOTIDE SEQUENCE [LARGE SCALE GENOMIC DNA]</scope>
    <source>
        <strain>K12 / MG1655 / ATCC 47076</strain>
    </source>
</reference>
<reference key="5">
    <citation type="journal article" date="2006" name="Mol. Syst. Biol.">
        <title>Highly accurate genome sequences of Escherichia coli K-12 strains MG1655 and W3110.</title>
        <authorList>
            <person name="Hayashi K."/>
            <person name="Morooka N."/>
            <person name="Yamamoto Y."/>
            <person name="Fujita K."/>
            <person name="Isono K."/>
            <person name="Choi S."/>
            <person name="Ohtsubo E."/>
            <person name="Baba T."/>
            <person name="Wanner B.L."/>
            <person name="Mori H."/>
            <person name="Horiuchi T."/>
        </authorList>
    </citation>
    <scope>NUCLEOTIDE SEQUENCE [LARGE SCALE GENOMIC DNA]</scope>
    <source>
        <strain>K12 / W3110 / ATCC 27325 / DSM 5911</strain>
    </source>
</reference>
<name>YBEF_ECOLI</name>
<sequence>MDSNNQIEPCLSRKSSEGKPQIFTTLRNIDLNLLTIFEAVYVHKGIVNAAKVLNLTPSAISQSIQKLRVIFPDPLFIRKGQGVTPTAFAMHLHEYISQGLESILGALDIEGSYDKQRTITIATTPSVGALVLPVIYRAIKTHYPQLLLRNPPISDAENQLSQFQTDLIIDNMFCTNRTVQHHVLFTDNMVLICREGNPLLSLEDDRETIDNAAHVLLLPEEQNFSGLRQRVQEMFPDRQINFTSYNILTIAALVANSDMLAIIPSRFYNLFSRCWPLEKLPFPSLNEEQIDFSIHYNKFSLRDPILHGVIDVIRNAF</sequence>
<accession>P30979</accession>
<accession>P75727</accession>
<accession>P77105</accession>
<keyword id="KW-0238">DNA-binding</keyword>
<keyword id="KW-1185">Reference proteome</keyword>
<keyword id="KW-0804">Transcription</keyword>
<keyword id="KW-0805">Transcription regulation</keyword>
<dbReference type="EMBL" id="L07636">
    <property type="protein sequence ID" value="AAA66344.1"/>
    <property type="status" value="ALT_FRAME"/>
    <property type="molecule type" value="Genomic_DNA"/>
</dbReference>
<dbReference type="EMBL" id="U82598">
    <property type="protein sequence ID" value="AAB40829.1"/>
    <property type="molecule type" value="Genomic_DNA"/>
</dbReference>
<dbReference type="EMBL" id="U00096">
    <property type="protein sequence ID" value="AAC73730.2"/>
    <property type="molecule type" value="Genomic_DNA"/>
</dbReference>
<dbReference type="EMBL" id="AP009048">
    <property type="protein sequence ID" value="BAA35272.1"/>
    <property type="molecule type" value="Genomic_DNA"/>
</dbReference>
<dbReference type="PIR" id="C64797">
    <property type="entry name" value="C64797"/>
</dbReference>
<dbReference type="RefSeq" id="NP_415162.4">
    <property type="nucleotide sequence ID" value="NC_000913.3"/>
</dbReference>
<dbReference type="RefSeq" id="WP_000378026.1">
    <property type="nucleotide sequence ID" value="NZ_SSZK01000037.1"/>
</dbReference>
<dbReference type="SMR" id="P30979"/>
<dbReference type="BioGRID" id="4260778">
    <property type="interactions" value="120"/>
</dbReference>
<dbReference type="FunCoup" id="P30979">
    <property type="interactions" value="32"/>
</dbReference>
<dbReference type="IntAct" id="P30979">
    <property type="interactions" value="2"/>
</dbReference>
<dbReference type="STRING" id="511145.b0629"/>
<dbReference type="PaxDb" id="511145-b0629"/>
<dbReference type="DNASU" id="945219"/>
<dbReference type="EnsemblBacteria" id="AAC73730">
    <property type="protein sequence ID" value="AAC73730"/>
    <property type="gene ID" value="b0629"/>
</dbReference>
<dbReference type="GeneID" id="945219"/>
<dbReference type="KEGG" id="ecj:JW0624"/>
<dbReference type="KEGG" id="eco:b0629"/>
<dbReference type="KEGG" id="ecoc:C3026_03140"/>
<dbReference type="PATRIC" id="fig|1411691.4.peg.1639"/>
<dbReference type="EchoBASE" id="EB1551"/>
<dbReference type="eggNOG" id="COG0583">
    <property type="taxonomic scope" value="Bacteria"/>
</dbReference>
<dbReference type="HOGENOM" id="CLU_039613_39_5_6"/>
<dbReference type="InParanoid" id="P30979"/>
<dbReference type="OMA" id="SISMIWH"/>
<dbReference type="OrthoDB" id="6413555at2"/>
<dbReference type="PhylomeDB" id="P30979"/>
<dbReference type="BioCyc" id="EcoCyc:EG11594-MONOMER"/>
<dbReference type="PRO" id="PR:P30979"/>
<dbReference type="Proteomes" id="UP000000625">
    <property type="component" value="Chromosome"/>
</dbReference>
<dbReference type="GO" id="GO:0003677">
    <property type="term" value="F:DNA binding"/>
    <property type="evidence" value="ECO:0007669"/>
    <property type="project" value="UniProtKB-KW"/>
</dbReference>
<dbReference type="GO" id="GO:0003700">
    <property type="term" value="F:DNA-binding transcription factor activity"/>
    <property type="evidence" value="ECO:0007669"/>
    <property type="project" value="InterPro"/>
</dbReference>
<dbReference type="GO" id="GO:0006355">
    <property type="term" value="P:regulation of DNA-templated transcription"/>
    <property type="evidence" value="ECO:0000318"/>
    <property type="project" value="GO_Central"/>
</dbReference>
<dbReference type="FunFam" id="1.10.10.10:FF:000181">
    <property type="entry name" value="LysR family transcriptional regulator"/>
    <property type="match status" value="1"/>
</dbReference>
<dbReference type="FunFam" id="3.40.190.10:FF:000120">
    <property type="entry name" value="Transcriptional regulator, LysR family"/>
    <property type="match status" value="1"/>
</dbReference>
<dbReference type="Gene3D" id="3.40.190.10">
    <property type="entry name" value="Periplasmic binding protein-like II"/>
    <property type="match status" value="2"/>
</dbReference>
<dbReference type="Gene3D" id="1.10.10.10">
    <property type="entry name" value="Winged helix-like DNA-binding domain superfamily/Winged helix DNA-binding domain"/>
    <property type="match status" value="1"/>
</dbReference>
<dbReference type="InterPro" id="IPR050389">
    <property type="entry name" value="LysR-type_TF"/>
</dbReference>
<dbReference type="InterPro" id="IPR005119">
    <property type="entry name" value="LysR_subst-bd"/>
</dbReference>
<dbReference type="InterPro" id="IPR000847">
    <property type="entry name" value="Tscrpt_reg_HTH_LysR"/>
</dbReference>
<dbReference type="InterPro" id="IPR036388">
    <property type="entry name" value="WH-like_DNA-bd_sf"/>
</dbReference>
<dbReference type="InterPro" id="IPR036390">
    <property type="entry name" value="WH_DNA-bd_sf"/>
</dbReference>
<dbReference type="NCBIfam" id="NF008554">
    <property type="entry name" value="PRK11482.1"/>
    <property type="match status" value="1"/>
</dbReference>
<dbReference type="PANTHER" id="PTHR30118">
    <property type="entry name" value="HTH-TYPE TRANSCRIPTIONAL REGULATOR LEUO-RELATED"/>
    <property type="match status" value="1"/>
</dbReference>
<dbReference type="PANTHER" id="PTHR30118:SF10">
    <property type="entry name" value="LYSR FAMILY TRANSCRIPTIONAL REGULATOR"/>
    <property type="match status" value="1"/>
</dbReference>
<dbReference type="Pfam" id="PF00126">
    <property type="entry name" value="HTH_1"/>
    <property type="match status" value="1"/>
</dbReference>
<dbReference type="Pfam" id="PF03466">
    <property type="entry name" value="LysR_substrate"/>
    <property type="match status" value="1"/>
</dbReference>
<dbReference type="SUPFAM" id="SSF53850">
    <property type="entry name" value="Periplasmic binding protein-like II"/>
    <property type="match status" value="1"/>
</dbReference>
<dbReference type="SUPFAM" id="SSF46785">
    <property type="entry name" value="Winged helix' DNA-binding domain"/>
    <property type="match status" value="1"/>
</dbReference>
<dbReference type="PROSITE" id="PS50931">
    <property type="entry name" value="HTH_LYSR"/>
    <property type="match status" value="1"/>
</dbReference>
<evidence type="ECO:0000255" key="1">
    <source>
        <dbReference type="PROSITE-ProRule" id="PRU00253"/>
    </source>
</evidence>
<evidence type="ECO:0000305" key="2"/>
<feature type="chain" id="PRO_0000105779" description="Uncharacterized HTH-type transcriptional regulator YbeF">
    <location>
        <begin position="1"/>
        <end position="317"/>
    </location>
</feature>
<feature type="domain" description="HTH lysR-type" evidence="1">
    <location>
        <begin position="29"/>
        <end position="86"/>
    </location>
</feature>
<feature type="DNA-binding region" description="H-T-H motif" evidence="1">
    <location>
        <begin position="46"/>
        <end position="65"/>
    </location>
</feature>
<feature type="sequence conflict" description="In Ref. 1; AAA66344." evidence="2" ref="1">
    <location>
        <position position="297"/>
    </location>
</feature>
<protein>
    <recommendedName>
        <fullName>Uncharacterized HTH-type transcriptional regulator YbeF</fullName>
    </recommendedName>
</protein>
<proteinExistence type="inferred from homology"/>
<gene>
    <name type="primary">ybeF</name>
    <name type="ordered locus">b0629</name>
    <name type="ordered locus">JW0624</name>
</gene>
<organism>
    <name type="scientific">Escherichia coli (strain K12)</name>
    <dbReference type="NCBI Taxonomy" id="83333"/>
    <lineage>
        <taxon>Bacteria</taxon>
        <taxon>Pseudomonadati</taxon>
        <taxon>Pseudomonadota</taxon>
        <taxon>Gammaproteobacteria</taxon>
        <taxon>Enterobacterales</taxon>
        <taxon>Enterobacteriaceae</taxon>
        <taxon>Escherichia</taxon>
    </lineage>
</organism>